<evidence type="ECO:0000255" key="1">
    <source>
        <dbReference type="HAMAP-Rule" id="MF_00480"/>
    </source>
</evidence>
<evidence type="ECO:0000305" key="2"/>
<keyword id="KW-0687">Ribonucleoprotein</keyword>
<keyword id="KW-0689">Ribosomal protein</keyword>
<keyword id="KW-0694">RNA-binding</keyword>
<keyword id="KW-0699">rRNA-binding</keyword>
<keyword id="KW-0820">tRNA-binding</keyword>
<dbReference type="EMBL" id="BA000031">
    <property type="protein sequence ID" value="BAC61035.1"/>
    <property type="molecule type" value="Genomic_DNA"/>
</dbReference>
<dbReference type="RefSeq" id="NP_799151.1">
    <property type="nucleotide sequence ID" value="NC_004603.1"/>
</dbReference>
<dbReference type="RefSeq" id="WP_005488949.1">
    <property type="nucleotide sequence ID" value="NC_004603.1"/>
</dbReference>
<dbReference type="SMR" id="Q87L44"/>
<dbReference type="GeneID" id="1190322"/>
<dbReference type="KEGG" id="vpa:VP2772"/>
<dbReference type="PATRIC" id="fig|223926.6.peg.2668"/>
<dbReference type="eggNOG" id="COG0049">
    <property type="taxonomic scope" value="Bacteria"/>
</dbReference>
<dbReference type="HOGENOM" id="CLU_072226_1_1_6"/>
<dbReference type="Proteomes" id="UP000002493">
    <property type="component" value="Chromosome 1"/>
</dbReference>
<dbReference type="GO" id="GO:0015935">
    <property type="term" value="C:small ribosomal subunit"/>
    <property type="evidence" value="ECO:0007669"/>
    <property type="project" value="InterPro"/>
</dbReference>
<dbReference type="GO" id="GO:0019843">
    <property type="term" value="F:rRNA binding"/>
    <property type="evidence" value="ECO:0007669"/>
    <property type="project" value="UniProtKB-UniRule"/>
</dbReference>
<dbReference type="GO" id="GO:0003735">
    <property type="term" value="F:structural constituent of ribosome"/>
    <property type="evidence" value="ECO:0007669"/>
    <property type="project" value="InterPro"/>
</dbReference>
<dbReference type="GO" id="GO:0000049">
    <property type="term" value="F:tRNA binding"/>
    <property type="evidence" value="ECO:0007669"/>
    <property type="project" value="UniProtKB-UniRule"/>
</dbReference>
<dbReference type="GO" id="GO:0006412">
    <property type="term" value="P:translation"/>
    <property type="evidence" value="ECO:0007669"/>
    <property type="project" value="UniProtKB-UniRule"/>
</dbReference>
<dbReference type="CDD" id="cd14869">
    <property type="entry name" value="uS7_Bacteria"/>
    <property type="match status" value="1"/>
</dbReference>
<dbReference type="FunFam" id="1.10.455.10:FF:000001">
    <property type="entry name" value="30S ribosomal protein S7"/>
    <property type="match status" value="1"/>
</dbReference>
<dbReference type="Gene3D" id="1.10.455.10">
    <property type="entry name" value="Ribosomal protein S7 domain"/>
    <property type="match status" value="1"/>
</dbReference>
<dbReference type="HAMAP" id="MF_00480_B">
    <property type="entry name" value="Ribosomal_uS7_B"/>
    <property type="match status" value="1"/>
</dbReference>
<dbReference type="InterPro" id="IPR000235">
    <property type="entry name" value="Ribosomal_uS7"/>
</dbReference>
<dbReference type="InterPro" id="IPR005717">
    <property type="entry name" value="Ribosomal_uS7_bac/org-type"/>
</dbReference>
<dbReference type="InterPro" id="IPR020606">
    <property type="entry name" value="Ribosomal_uS7_CS"/>
</dbReference>
<dbReference type="InterPro" id="IPR023798">
    <property type="entry name" value="Ribosomal_uS7_dom"/>
</dbReference>
<dbReference type="InterPro" id="IPR036823">
    <property type="entry name" value="Ribosomal_uS7_dom_sf"/>
</dbReference>
<dbReference type="NCBIfam" id="TIGR01029">
    <property type="entry name" value="rpsG_bact"/>
    <property type="match status" value="1"/>
</dbReference>
<dbReference type="PANTHER" id="PTHR11205">
    <property type="entry name" value="RIBOSOMAL PROTEIN S7"/>
    <property type="match status" value="1"/>
</dbReference>
<dbReference type="Pfam" id="PF00177">
    <property type="entry name" value="Ribosomal_S7"/>
    <property type="match status" value="1"/>
</dbReference>
<dbReference type="PIRSF" id="PIRSF002122">
    <property type="entry name" value="RPS7p_RPS7a_RPS5e_RPS7o"/>
    <property type="match status" value="1"/>
</dbReference>
<dbReference type="SUPFAM" id="SSF47973">
    <property type="entry name" value="Ribosomal protein S7"/>
    <property type="match status" value="1"/>
</dbReference>
<dbReference type="PROSITE" id="PS00052">
    <property type="entry name" value="RIBOSOMAL_S7"/>
    <property type="match status" value="1"/>
</dbReference>
<organism>
    <name type="scientific">Vibrio parahaemolyticus serotype O3:K6 (strain RIMD 2210633)</name>
    <dbReference type="NCBI Taxonomy" id="223926"/>
    <lineage>
        <taxon>Bacteria</taxon>
        <taxon>Pseudomonadati</taxon>
        <taxon>Pseudomonadota</taxon>
        <taxon>Gammaproteobacteria</taxon>
        <taxon>Vibrionales</taxon>
        <taxon>Vibrionaceae</taxon>
        <taxon>Vibrio</taxon>
    </lineage>
</organism>
<accession>Q87L44</accession>
<reference key="1">
    <citation type="journal article" date="2003" name="Lancet">
        <title>Genome sequence of Vibrio parahaemolyticus: a pathogenic mechanism distinct from that of V. cholerae.</title>
        <authorList>
            <person name="Makino K."/>
            <person name="Oshima K."/>
            <person name="Kurokawa K."/>
            <person name="Yokoyama K."/>
            <person name="Uda T."/>
            <person name="Tagomori K."/>
            <person name="Iijima Y."/>
            <person name="Najima M."/>
            <person name="Nakano M."/>
            <person name="Yamashita A."/>
            <person name="Kubota Y."/>
            <person name="Kimura S."/>
            <person name="Yasunaga T."/>
            <person name="Honda T."/>
            <person name="Shinagawa H."/>
            <person name="Hattori M."/>
            <person name="Iida T."/>
        </authorList>
    </citation>
    <scope>NUCLEOTIDE SEQUENCE [LARGE SCALE GENOMIC DNA]</scope>
    <source>
        <strain>RIMD 2210633</strain>
    </source>
</reference>
<protein>
    <recommendedName>
        <fullName evidence="1">Small ribosomal subunit protein uS7</fullName>
    </recommendedName>
    <alternativeName>
        <fullName evidence="2">30S ribosomal protein S7</fullName>
    </alternativeName>
</protein>
<feature type="chain" id="PRO_0000124378" description="Small ribosomal subunit protein uS7">
    <location>
        <begin position="1"/>
        <end position="156"/>
    </location>
</feature>
<name>RS7_VIBPA</name>
<comment type="function">
    <text evidence="1">One of the primary rRNA binding proteins, it binds directly to 16S rRNA where it nucleates assembly of the head domain of the 30S subunit. Is located at the subunit interface close to the decoding center, probably blocks exit of the E-site tRNA.</text>
</comment>
<comment type="subunit">
    <text evidence="1">Part of the 30S ribosomal subunit. Contacts proteins S9 and S11.</text>
</comment>
<comment type="similarity">
    <text evidence="1">Belongs to the universal ribosomal protein uS7 family.</text>
</comment>
<sequence>MPRRRVIGQRKILPDPKFKSELLAKFVNILMVDGKKSTAEKIVYTALDSMAEKSGKDHLAIFEEALENVRPAVEVKSRRVGGSTYQVPVEVRPVRRNALAMRWLVEAARKRGEKSMAQRLAAEMLDASENKGTAVKKREDVHRMAEANKAFAHYRW</sequence>
<proteinExistence type="inferred from homology"/>
<gene>
    <name evidence="1" type="primary">rpsG</name>
    <name type="ordered locus">VP2772</name>
</gene>